<accession>P61876</accession>
<accession>P80061</accession>
<accession>P95584</accession>
<protein>
    <recommendedName>
        <fullName>DNA polymerase</fullName>
        <ecNumber>2.7.7.7</ecNumber>
    </recommendedName>
    <alternativeName>
        <fullName>Pwo polymerase</fullName>
    </alternativeName>
</protein>
<evidence type="ECO:0000305" key="1"/>
<comment type="function">
    <text>In addition to polymerase activity, this DNA polymerase exhibits 3' to 5' exonuclease activity.</text>
</comment>
<comment type="catalytic activity">
    <reaction>
        <text>DNA(n) + a 2'-deoxyribonucleoside 5'-triphosphate = DNA(n+1) + diphosphate</text>
        <dbReference type="Rhea" id="RHEA:22508"/>
        <dbReference type="Rhea" id="RHEA-COMP:17339"/>
        <dbReference type="Rhea" id="RHEA-COMP:17340"/>
        <dbReference type="ChEBI" id="CHEBI:33019"/>
        <dbReference type="ChEBI" id="CHEBI:61560"/>
        <dbReference type="ChEBI" id="CHEBI:173112"/>
        <dbReference type="EC" id="2.7.7.7"/>
    </reaction>
</comment>
<comment type="subunit">
    <text>Monomer.</text>
</comment>
<comment type="similarity">
    <text evidence="1">Belongs to the DNA polymerase type-B family.</text>
</comment>
<organism>
    <name type="scientific">Pyrococcus woesei</name>
    <dbReference type="NCBI Taxonomy" id="2262"/>
    <lineage>
        <taxon>Archaea</taxon>
        <taxon>Methanobacteriati</taxon>
        <taxon>Methanobacteriota</taxon>
        <taxon>Thermococci</taxon>
        <taxon>Thermococcales</taxon>
        <taxon>Thermococcaceae</taxon>
        <taxon>Pyrococcus</taxon>
    </lineage>
</organism>
<sequence length="775" mass="90113">MILDVDYITEEGKPVIRLFKKENGKFKIEHDRTFRPYIYALLRDDSKIEEVKKITGERHGKIVRIVDVEKVEKKFLGKPITVWKLYLEHPQDVPTIREKVREHPAVVDIFEYDIPFAKRYLIDKGLIPMEGEEELKILAFDIETLYHEGEEFGKGPIIMISYADENEAKVITWKNIDLPYVEVVSSEREMIKRFLRIIREKDPDIIVTYNGDSFDFPYLAKRAEKLGIKLTIGRDGSEPKMQRIGDMTAVEVKGRIHFDLYHVITRTINLPTYTLEAVYEAIFGKPKEKVYADEIAKAWESGENLERVAKYSMEDAKATYELGKEFLPMEIQLSRLVGQPLWDVSRSSTGNLVEWFLLRKAYERNEVAPNKPSEEEYQRRLRESYTGGFVKEPEKGLWENIVYLDFRALYPSIIITHNVSPDTLNLEGCKNYDIAPQVGHKFCKDIPGFIPSLLGHLLEERQKIKTKMKETQDPIEKILLDYRQKAIKLLANSFYGYYGYAKARWYCKECAESVTAWGRKYIELVWKELEEKFGFKVLYIDTDGLYATIPGGESEEIKKKALEFVKYINSKLPGLLELEYEGFYKRGFFVTKKRYAVIDEEGKVITRGLEIVRRDWSEIAKETQARVLETILKHGDVEEAVRIVKEVIQKLANYEIPPEKLAIYEQITRPLHEYKAIGPHVAVAKKLAAKGVKIKPGMVIGYIVLRGDGPISNRAILAEEYDPKKHKYDAEYYIENQVLPAVLRILEGFGYRKEDLRYQKTRQVGLTSWLNIKKS</sequence>
<dbReference type="EC" id="2.7.7.7"/>
<dbReference type="EMBL" id="U84155">
    <property type="protein sequence ID" value="AAB67984.1"/>
    <property type="molecule type" value="Genomic_DNA"/>
</dbReference>
<dbReference type="SMR" id="P61876"/>
<dbReference type="BRENDA" id="2.7.7.7">
    <property type="organism ID" value="5249"/>
</dbReference>
<dbReference type="GO" id="GO:0003677">
    <property type="term" value="F:DNA binding"/>
    <property type="evidence" value="ECO:0007669"/>
    <property type="project" value="UniProtKB-KW"/>
</dbReference>
<dbReference type="GO" id="GO:0003887">
    <property type="term" value="F:DNA-directed DNA polymerase activity"/>
    <property type="evidence" value="ECO:0007669"/>
    <property type="project" value="UniProtKB-KW"/>
</dbReference>
<dbReference type="GO" id="GO:0004519">
    <property type="term" value="F:endonuclease activity"/>
    <property type="evidence" value="ECO:0007669"/>
    <property type="project" value="UniProtKB-KW"/>
</dbReference>
<dbReference type="GO" id="GO:0000166">
    <property type="term" value="F:nucleotide binding"/>
    <property type="evidence" value="ECO:0007669"/>
    <property type="project" value="InterPro"/>
</dbReference>
<dbReference type="GO" id="GO:0006261">
    <property type="term" value="P:DNA-templated DNA replication"/>
    <property type="evidence" value="ECO:0007669"/>
    <property type="project" value="TreeGrafter"/>
</dbReference>
<dbReference type="CDD" id="cd05780">
    <property type="entry name" value="DNA_polB_Kod1_like_exo"/>
    <property type="match status" value="1"/>
</dbReference>
<dbReference type="CDD" id="cd05536">
    <property type="entry name" value="POLBc_B3"/>
    <property type="match status" value="1"/>
</dbReference>
<dbReference type="FunFam" id="3.30.342.10:FF:000015">
    <property type="entry name" value="DNA polymerase"/>
    <property type="match status" value="1"/>
</dbReference>
<dbReference type="FunFam" id="1.10.132.60:FF:000013">
    <property type="entry name" value="DNA polymerase Pol2"/>
    <property type="match status" value="1"/>
</dbReference>
<dbReference type="Gene3D" id="1.10.132.60">
    <property type="entry name" value="DNA polymerase family B, C-terminal domain"/>
    <property type="match status" value="1"/>
</dbReference>
<dbReference type="Gene3D" id="3.30.342.10">
    <property type="entry name" value="DNA Polymerase, chain B, domain 1"/>
    <property type="match status" value="1"/>
</dbReference>
<dbReference type="Gene3D" id="1.10.287.690">
    <property type="entry name" value="Helix hairpin bin"/>
    <property type="match status" value="1"/>
</dbReference>
<dbReference type="Gene3D" id="3.90.1600.10">
    <property type="entry name" value="Palm domain of DNA polymerase"/>
    <property type="match status" value="1"/>
</dbReference>
<dbReference type="Gene3D" id="3.30.420.10">
    <property type="entry name" value="Ribonuclease H-like superfamily/Ribonuclease H"/>
    <property type="match status" value="1"/>
</dbReference>
<dbReference type="InterPro" id="IPR006172">
    <property type="entry name" value="DNA-dir_DNA_pol_B"/>
</dbReference>
<dbReference type="InterPro" id="IPR017964">
    <property type="entry name" value="DNA-dir_DNA_pol_B_CS"/>
</dbReference>
<dbReference type="InterPro" id="IPR006133">
    <property type="entry name" value="DNA-dir_DNA_pol_B_exonuc"/>
</dbReference>
<dbReference type="InterPro" id="IPR006134">
    <property type="entry name" value="DNA-dir_DNA_pol_B_multi_dom"/>
</dbReference>
<dbReference type="InterPro" id="IPR043502">
    <property type="entry name" value="DNA/RNA_pol_sf"/>
</dbReference>
<dbReference type="InterPro" id="IPR042087">
    <property type="entry name" value="DNA_pol_B_thumb"/>
</dbReference>
<dbReference type="InterPro" id="IPR023211">
    <property type="entry name" value="DNA_pol_palm_dom_sf"/>
</dbReference>
<dbReference type="InterPro" id="IPR050240">
    <property type="entry name" value="DNA_pol_type-B"/>
</dbReference>
<dbReference type="InterPro" id="IPR012337">
    <property type="entry name" value="RNaseH-like_sf"/>
</dbReference>
<dbReference type="InterPro" id="IPR036397">
    <property type="entry name" value="RNaseH_sf"/>
</dbReference>
<dbReference type="NCBIfam" id="TIGR00592">
    <property type="entry name" value="pol2"/>
    <property type="match status" value="2"/>
</dbReference>
<dbReference type="PANTHER" id="PTHR10322">
    <property type="entry name" value="DNA POLYMERASE CATALYTIC SUBUNIT"/>
    <property type="match status" value="1"/>
</dbReference>
<dbReference type="PANTHER" id="PTHR10322:SF23">
    <property type="entry name" value="DNA POLYMERASE DELTA CATALYTIC SUBUNIT"/>
    <property type="match status" value="1"/>
</dbReference>
<dbReference type="Pfam" id="PF00136">
    <property type="entry name" value="DNA_pol_B"/>
    <property type="match status" value="1"/>
</dbReference>
<dbReference type="Pfam" id="PF03104">
    <property type="entry name" value="DNA_pol_B_exo1"/>
    <property type="match status" value="1"/>
</dbReference>
<dbReference type="PRINTS" id="PR00106">
    <property type="entry name" value="DNAPOLB"/>
</dbReference>
<dbReference type="SMART" id="SM00486">
    <property type="entry name" value="POLBc"/>
    <property type="match status" value="1"/>
</dbReference>
<dbReference type="SUPFAM" id="SSF56672">
    <property type="entry name" value="DNA/RNA polymerases"/>
    <property type="match status" value="1"/>
</dbReference>
<dbReference type="SUPFAM" id="SSF53098">
    <property type="entry name" value="Ribonuclease H-like"/>
    <property type="match status" value="1"/>
</dbReference>
<dbReference type="PROSITE" id="PS00116">
    <property type="entry name" value="DNA_POLYMERASE_B"/>
    <property type="match status" value="1"/>
</dbReference>
<name>DPOL_PYRWO</name>
<gene>
    <name type="primary">pol</name>
</gene>
<keyword id="KW-0235">DNA replication</keyword>
<keyword id="KW-0238">DNA-binding</keyword>
<keyword id="KW-0239">DNA-directed DNA polymerase</keyword>
<keyword id="KW-0255">Endonuclease</keyword>
<keyword id="KW-0378">Hydrolase</keyword>
<keyword id="KW-0540">Nuclease</keyword>
<keyword id="KW-0548">Nucleotidyltransferase</keyword>
<keyword id="KW-0808">Transferase</keyword>
<feature type="chain" id="PRO_0000046481" description="DNA polymerase">
    <location>
        <begin position="1"/>
        <end position="775"/>
    </location>
</feature>
<proteinExistence type="evidence at protein level"/>
<reference key="1">
    <citation type="journal article" date="1998" name="Protein Expr. Purif.">
        <title>Cloning and expression in Escherichia coli of the recombinant his-tagged DNA polymerases from Pyrococcus furiosus and Pyrococcus woesei.</title>
        <authorList>
            <person name="Dabrowski S."/>
            <person name="Kur J."/>
        </authorList>
    </citation>
    <scope>NUCLEOTIDE SEQUENCE [GENOMIC DNA]</scope>
    <scope>CHARACTERIZATION</scope>
    <source>
        <strain>ATCC 49860 / DSM 3773 / JCM 8421 / Vul4</strain>
    </source>
</reference>